<protein>
    <recommendedName>
        <fullName>Thiazole synthase</fullName>
        <ecNumber evidence="2">2.8.1.10</ecNumber>
    </recommendedName>
</protein>
<proteinExistence type="evidence at protein level"/>
<accession>O31618</accession>
<evidence type="ECO:0000250" key="1"/>
<evidence type="ECO:0000269" key="2">
    <source>
    </source>
</evidence>
<evidence type="ECO:0000269" key="3">
    <source>
    </source>
</evidence>
<evidence type="ECO:0000269" key="4">
    <source>
    </source>
</evidence>
<evidence type="ECO:0000305" key="5"/>
<evidence type="ECO:0007829" key="6">
    <source>
        <dbReference type="PDB" id="1TYG"/>
    </source>
</evidence>
<evidence type="ECO:0007829" key="7">
    <source>
        <dbReference type="PDB" id="1XM3"/>
    </source>
</evidence>
<reference key="1">
    <citation type="journal article" date="1997" name="Nature">
        <title>The complete genome sequence of the Gram-positive bacterium Bacillus subtilis.</title>
        <authorList>
            <person name="Kunst F."/>
            <person name="Ogasawara N."/>
            <person name="Moszer I."/>
            <person name="Albertini A.M."/>
            <person name="Alloni G."/>
            <person name="Azevedo V."/>
            <person name="Bertero M.G."/>
            <person name="Bessieres P."/>
            <person name="Bolotin A."/>
            <person name="Borchert S."/>
            <person name="Borriss R."/>
            <person name="Boursier L."/>
            <person name="Brans A."/>
            <person name="Braun M."/>
            <person name="Brignell S.C."/>
            <person name="Bron S."/>
            <person name="Brouillet S."/>
            <person name="Bruschi C.V."/>
            <person name="Caldwell B."/>
            <person name="Capuano V."/>
            <person name="Carter N.M."/>
            <person name="Choi S.-K."/>
            <person name="Codani J.-J."/>
            <person name="Connerton I.F."/>
            <person name="Cummings N.J."/>
            <person name="Daniel R.A."/>
            <person name="Denizot F."/>
            <person name="Devine K.M."/>
            <person name="Duesterhoeft A."/>
            <person name="Ehrlich S.D."/>
            <person name="Emmerson P.T."/>
            <person name="Entian K.-D."/>
            <person name="Errington J."/>
            <person name="Fabret C."/>
            <person name="Ferrari E."/>
            <person name="Foulger D."/>
            <person name="Fritz C."/>
            <person name="Fujita M."/>
            <person name="Fujita Y."/>
            <person name="Fuma S."/>
            <person name="Galizzi A."/>
            <person name="Galleron N."/>
            <person name="Ghim S.-Y."/>
            <person name="Glaser P."/>
            <person name="Goffeau A."/>
            <person name="Golightly E.J."/>
            <person name="Grandi G."/>
            <person name="Guiseppi G."/>
            <person name="Guy B.J."/>
            <person name="Haga K."/>
            <person name="Haiech J."/>
            <person name="Harwood C.R."/>
            <person name="Henaut A."/>
            <person name="Hilbert H."/>
            <person name="Holsappel S."/>
            <person name="Hosono S."/>
            <person name="Hullo M.-F."/>
            <person name="Itaya M."/>
            <person name="Jones L.-M."/>
            <person name="Joris B."/>
            <person name="Karamata D."/>
            <person name="Kasahara Y."/>
            <person name="Klaerr-Blanchard M."/>
            <person name="Klein C."/>
            <person name="Kobayashi Y."/>
            <person name="Koetter P."/>
            <person name="Koningstein G."/>
            <person name="Krogh S."/>
            <person name="Kumano M."/>
            <person name="Kurita K."/>
            <person name="Lapidus A."/>
            <person name="Lardinois S."/>
            <person name="Lauber J."/>
            <person name="Lazarevic V."/>
            <person name="Lee S.-M."/>
            <person name="Levine A."/>
            <person name="Liu H."/>
            <person name="Masuda S."/>
            <person name="Mauel C."/>
            <person name="Medigue C."/>
            <person name="Medina N."/>
            <person name="Mellado R.P."/>
            <person name="Mizuno M."/>
            <person name="Moestl D."/>
            <person name="Nakai S."/>
            <person name="Noback M."/>
            <person name="Noone D."/>
            <person name="O'Reilly M."/>
            <person name="Ogawa K."/>
            <person name="Ogiwara A."/>
            <person name="Oudega B."/>
            <person name="Park S.-H."/>
            <person name="Parro V."/>
            <person name="Pohl T.M."/>
            <person name="Portetelle D."/>
            <person name="Porwollik S."/>
            <person name="Prescott A.M."/>
            <person name="Presecan E."/>
            <person name="Pujic P."/>
            <person name="Purnelle B."/>
            <person name="Rapoport G."/>
            <person name="Rey M."/>
            <person name="Reynolds S."/>
            <person name="Rieger M."/>
            <person name="Rivolta C."/>
            <person name="Rocha E."/>
            <person name="Roche B."/>
            <person name="Rose M."/>
            <person name="Sadaie Y."/>
            <person name="Sato T."/>
            <person name="Scanlan E."/>
            <person name="Schleich S."/>
            <person name="Schroeter R."/>
            <person name="Scoffone F."/>
            <person name="Sekiguchi J."/>
            <person name="Sekowska A."/>
            <person name="Seror S.J."/>
            <person name="Serror P."/>
            <person name="Shin B.-S."/>
            <person name="Soldo B."/>
            <person name="Sorokin A."/>
            <person name="Tacconi E."/>
            <person name="Takagi T."/>
            <person name="Takahashi H."/>
            <person name="Takemaru K."/>
            <person name="Takeuchi M."/>
            <person name="Tamakoshi A."/>
            <person name="Tanaka T."/>
            <person name="Terpstra P."/>
            <person name="Tognoni A."/>
            <person name="Tosato V."/>
            <person name="Uchiyama S."/>
            <person name="Vandenbol M."/>
            <person name="Vannier F."/>
            <person name="Vassarotti A."/>
            <person name="Viari A."/>
            <person name="Wambutt R."/>
            <person name="Wedler E."/>
            <person name="Wedler H."/>
            <person name="Weitzenegger T."/>
            <person name="Winters P."/>
            <person name="Wipat A."/>
            <person name="Yamamoto H."/>
            <person name="Yamane K."/>
            <person name="Yasumoto K."/>
            <person name="Yata K."/>
            <person name="Yoshida K."/>
            <person name="Yoshikawa H.-F."/>
            <person name="Zumstein E."/>
            <person name="Yoshikawa H."/>
            <person name="Danchin A."/>
        </authorList>
    </citation>
    <scope>NUCLEOTIDE SEQUENCE [LARGE SCALE GENOMIC DNA]</scope>
    <source>
        <strain>168</strain>
    </source>
</reference>
<reference key="2">
    <citation type="journal article" date="2003" name="Biochemistry">
        <title>Biosynthesis of the thiazole moiety of thiamin pyrophosphate (vitamin B1).</title>
        <authorList>
            <person name="Park J.-H."/>
            <person name="Dorrestein P.C."/>
            <person name="Zhai H."/>
            <person name="Kinsland C."/>
            <person name="McLafferty F.W."/>
            <person name="Begley T.P."/>
        </authorList>
    </citation>
    <scope>FUNCTION</scope>
    <scope>CATALYTIC ACTIVITY</scope>
    <source>
        <strain>168 / CU1065</strain>
    </source>
</reference>
<reference key="3">
    <citation type="journal article" date="2004" name="Chem. Biol.">
        <title>The biosynthesis of the thiazole phosphate moiety of thiamin: the sulfur transfer mediated by the sulfur carrier protein ThiS.</title>
        <authorList>
            <person name="Dorrestein P.C."/>
            <person name="Zhai H."/>
            <person name="McLafferty F.W."/>
            <person name="Begley T.P."/>
        </authorList>
    </citation>
    <scope>REACTION MECHANISM</scope>
</reference>
<reference key="4">
    <citation type="journal article" date="2004" name="J. Am. Chem. Soc.">
        <title>The biosynthesis of the thiazole phosphate moiety of thiamin (vitamin B1): the early steps catalyzed by thiazole synthase.</title>
        <authorList>
            <person name="Dorrestein P.C."/>
            <person name="Zhai H."/>
            <person name="Taylor S.V."/>
            <person name="McLafferty F.W."/>
            <person name="Begley T.P."/>
        </authorList>
    </citation>
    <scope>REACTION MECHANISM</scope>
    <scope>MUTAGENESIS OF LYS-98</scope>
    <scope>ROLE OF LYS-98 IN SCHIFF BASE FORMATION WITH DXP</scope>
    <source>
        <strain>168 / CU1065</strain>
    </source>
</reference>
<reference key="5">
    <citation type="journal article" date="2009" name="J. Am. Chem. Soc.">
        <title>Biosynthesis of the thiamin thiazole in Bacillus subtilis: identification of the product of the thiazole synthase-catalyzed reaction.</title>
        <authorList>
            <person name="Hazra A."/>
            <person name="Chatterjee A."/>
            <person name="Begley T.P."/>
        </authorList>
    </citation>
    <scope>REACTION PRODUCTS</scope>
    <scope>REACTION MECHANISM</scope>
</reference>
<reference key="6">
    <citation type="journal article" date="2004" name="Biochemistry">
        <title>Thiamin biosynthesis in Bacillus subtilis: structure of the thiazole synthase/sulfur carrier protein complex.</title>
        <authorList>
            <person name="Settembre E.C."/>
            <person name="Dorrestein P.C."/>
            <person name="Zhai H."/>
            <person name="Chatterjee A."/>
            <person name="McLafferty F.W."/>
            <person name="Begley T.P."/>
            <person name="Ealick S.E."/>
        </authorList>
    </citation>
    <scope>X-RAY CRYSTALLOGRAPHY (3.15 ANGSTROMS) OF 3-255 IN COMPLEX WITH SULFUR CARRIER PROTEIN THIS AND PHOSPHATE</scope>
    <scope>MUTAGENESIS OF GLU-100 AND ASP-184</scope>
    <scope>SUBUNIT</scope>
    <scope>REACTION MECHANISM</scope>
</reference>
<reference key="7">
    <citation type="submission" date="2009-02" db="PDB data bank">
        <title>Crystal structure of northeast structural genomics target sr156.</title>
        <authorList>
            <consortium name="Northeast structural genomics consortium (NESG)"/>
        </authorList>
    </citation>
    <scope>X-RAY CRYSTALLOGRAPHY (1.8 ANGSTROMS) OF 1-255</scope>
</reference>
<keyword id="KW-0002">3D-structure</keyword>
<keyword id="KW-0963">Cytoplasm</keyword>
<keyword id="KW-1185">Reference proteome</keyword>
<keyword id="KW-0704">Schiff base</keyword>
<keyword id="KW-0784">Thiamine biosynthesis</keyword>
<keyword id="KW-0808">Transferase</keyword>
<dbReference type="EC" id="2.8.1.10" evidence="2"/>
<dbReference type="EMBL" id="AL009126">
    <property type="protein sequence ID" value="CAB13026.1"/>
    <property type="molecule type" value="Genomic_DNA"/>
</dbReference>
<dbReference type="PIR" id="D69845">
    <property type="entry name" value="D69845"/>
</dbReference>
<dbReference type="RefSeq" id="NP_389051.1">
    <property type="nucleotide sequence ID" value="NC_000964.3"/>
</dbReference>
<dbReference type="RefSeq" id="WP_010886483.1">
    <property type="nucleotide sequence ID" value="NZ_OZ025638.1"/>
</dbReference>
<dbReference type="PDB" id="1TYG">
    <property type="method" value="X-ray"/>
    <property type="resolution" value="3.15 A"/>
    <property type="chains" value="A/C=3-255"/>
</dbReference>
<dbReference type="PDB" id="1XM3">
    <property type="method" value="X-ray"/>
    <property type="resolution" value="1.80 A"/>
    <property type="chains" value="A/B/C/D=1-255"/>
</dbReference>
<dbReference type="PDBsum" id="1TYG"/>
<dbReference type="PDBsum" id="1XM3"/>
<dbReference type="SMR" id="O31618"/>
<dbReference type="FunCoup" id="O31618">
    <property type="interactions" value="337"/>
</dbReference>
<dbReference type="IntAct" id="O31618">
    <property type="interactions" value="2"/>
</dbReference>
<dbReference type="MINT" id="O31618"/>
<dbReference type="STRING" id="224308.BSU11690"/>
<dbReference type="PaxDb" id="224308-BSU11690"/>
<dbReference type="EnsemblBacteria" id="CAB13026">
    <property type="protein sequence ID" value="CAB13026"/>
    <property type="gene ID" value="BSU_11690"/>
</dbReference>
<dbReference type="GeneID" id="936422"/>
<dbReference type="KEGG" id="bsu:BSU11690"/>
<dbReference type="eggNOG" id="COG2022">
    <property type="taxonomic scope" value="Bacteria"/>
</dbReference>
<dbReference type="InParanoid" id="O31618"/>
<dbReference type="OrthoDB" id="9805935at2"/>
<dbReference type="PhylomeDB" id="O31618"/>
<dbReference type="BioCyc" id="BSUB:BSU11690-MONOMER"/>
<dbReference type="BioCyc" id="MetaCyc:BSU11690-MONOMER"/>
<dbReference type="BRENDA" id="2.8.1.10">
    <property type="organism ID" value="658"/>
</dbReference>
<dbReference type="UniPathway" id="UPA00060"/>
<dbReference type="EvolutionaryTrace" id="O31618"/>
<dbReference type="Proteomes" id="UP000001570">
    <property type="component" value="Chromosome"/>
</dbReference>
<dbReference type="GO" id="GO:1902508">
    <property type="term" value="C:2-iminoacetate synthase complex"/>
    <property type="evidence" value="ECO:0000318"/>
    <property type="project" value="GO_Central"/>
</dbReference>
<dbReference type="GO" id="GO:0005737">
    <property type="term" value="C:cytoplasm"/>
    <property type="evidence" value="ECO:0007669"/>
    <property type="project" value="UniProtKB-SubCell"/>
</dbReference>
<dbReference type="GO" id="GO:1990107">
    <property type="term" value="F:thiazole synthase activity"/>
    <property type="evidence" value="ECO:0007669"/>
    <property type="project" value="UniProtKB-EC"/>
</dbReference>
<dbReference type="GO" id="GO:0009228">
    <property type="term" value="P:thiamine biosynthetic process"/>
    <property type="evidence" value="ECO:0000318"/>
    <property type="project" value="GO_Central"/>
</dbReference>
<dbReference type="GO" id="GO:0009229">
    <property type="term" value="P:thiamine diphosphate biosynthetic process"/>
    <property type="evidence" value="ECO:0000318"/>
    <property type="project" value="GO_Central"/>
</dbReference>
<dbReference type="CDD" id="cd04728">
    <property type="entry name" value="ThiG"/>
    <property type="match status" value="1"/>
</dbReference>
<dbReference type="FunFam" id="3.20.20.70:FF:000049">
    <property type="entry name" value="Thiazole synthase"/>
    <property type="match status" value="1"/>
</dbReference>
<dbReference type="Gene3D" id="3.20.20.70">
    <property type="entry name" value="Aldolase class I"/>
    <property type="match status" value="1"/>
</dbReference>
<dbReference type="HAMAP" id="MF_00443">
    <property type="entry name" value="ThiG"/>
    <property type="match status" value="1"/>
</dbReference>
<dbReference type="InterPro" id="IPR013785">
    <property type="entry name" value="Aldolase_TIM"/>
</dbReference>
<dbReference type="InterPro" id="IPR033983">
    <property type="entry name" value="Thiazole_synthase_ThiG"/>
</dbReference>
<dbReference type="InterPro" id="IPR008867">
    <property type="entry name" value="ThiG"/>
</dbReference>
<dbReference type="PANTHER" id="PTHR34266">
    <property type="entry name" value="THIAZOLE SYNTHASE"/>
    <property type="match status" value="1"/>
</dbReference>
<dbReference type="PANTHER" id="PTHR34266:SF2">
    <property type="entry name" value="THIAZOLE SYNTHASE"/>
    <property type="match status" value="1"/>
</dbReference>
<dbReference type="Pfam" id="PF05690">
    <property type="entry name" value="ThiG"/>
    <property type="match status" value="1"/>
</dbReference>
<dbReference type="SUPFAM" id="SSF110399">
    <property type="entry name" value="ThiG-like"/>
    <property type="match status" value="1"/>
</dbReference>
<comment type="function">
    <text evidence="2">Catalyzes the rearrangement of 1-deoxy-D-xylulose 5-phosphate (DXP) to produce the thiazole phosphate moiety of thiamine. Sulfur is provided by the thiocarboxylate moiety of the carrier protein ThiS. In vitro, sulfur can be provided by H(2)S.</text>
</comment>
<comment type="catalytic activity">
    <reaction evidence="2">
        <text>[ThiS sulfur-carrier protein]-C-terminal-Gly-aminoethanethioate + 2-iminoacetate + 1-deoxy-D-xylulose 5-phosphate = [ThiS sulfur-carrier protein]-C-terminal Gly-Gly + 2-[(2R,5Z)-2-carboxy-4-methylthiazol-5(2H)-ylidene]ethyl phosphate + 2 H2O + H(+)</text>
        <dbReference type="Rhea" id="RHEA:26297"/>
        <dbReference type="Rhea" id="RHEA-COMP:12909"/>
        <dbReference type="Rhea" id="RHEA-COMP:19908"/>
        <dbReference type="ChEBI" id="CHEBI:15377"/>
        <dbReference type="ChEBI" id="CHEBI:15378"/>
        <dbReference type="ChEBI" id="CHEBI:57792"/>
        <dbReference type="ChEBI" id="CHEBI:62899"/>
        <dbReference type="ChEBI" id="CHEBI:77846"/>
        <dbReference type="ChEBI" id="CHEBI:90778"/>
        <dbReference type="ChEBI" id="CHEBI:232372"/>
        <dbReference type="EC" id="2.8.1.10"/>
    </reaction>
</comment>
<comment type="pathway">
    <text>Cofactor biosynthesis; thiamine diphosphate biosynthesis.</text>
</comment>
<comment type="subunit">
    <text evidence="4">Homotetramer. Forms heterodimers with either ThiH or ThiS.</text>
</comment>
<comment type="subcellular location">
    <subcellularLocation>
        <location evidence="1">Cytoplasm</location>
    </subcellularLocation>
</comment>
<comment type="similarity">
    <text evidence="5">Belongs to the ThiG family.</text>
</comment>
<name>THIG_BACSU</name>
<organism>
    <name type="scientific">Bacillus subtilis (strain 168)</name>
    <dbReference type="NCBI Taxonomy" id="224308"/>
    <lineage>
        <taxon>Bacteria</taxon>
        <taxon>Bacillati</taxon>
        <taxon>Bacillota</taxon>
        <taxon>Bacilli</taxon>
        <taxon>Bacillales</taxon>
        <taxon>Bacillaceae</taxon>
        <taxon>Bacillus</taxon>
    </lineage>
</organism>
<feature type="chain" id="PRO_0000162788" description="Thiazole synthase">
    <location>
        <begin position="1"/>
        <end position="256"/>
    </location>
</feature>
<feature type="active site" description="Schiff-base intermediate with DXP">
    <location>
        <position position="98"/>
    </location>
</feature>
<feature type="binding site">
    <location>
        <position position="159"/>
    </location>
    <ligand>
        <name>1-deoxy-D-xylulose 5-phosphate</name>
        <dbReference type="ChEBI" id="CHEBI:57792"/>
    </ligand>
</feature>
<feature type="binding site">
    <location>
        <begin position="185"/>
        <end position="186"/>
    </location>
    <ligand>
        <name>1-deoxy-D-xylulose 5-phosphate</name>
        <dbReference type="ChEBI" id="CHEBI:57792"/>
    </ligand>
</feature>
<feature type="binding site">
    <location>
        <begin position="207"/>
        <end position="208"/>
    </location>
    <ligand>
        <name>1-deoxy-D-xylulose 5-phosphate</name>
        <dbReference type="ChEBI" id="CHEBI:57792"/>
    </ligand>
</feature>
<feature type="mutagenesis site" description="No activity; no imine formation with DXP." evidence="3">
    <original>K</original>
    <variation>A</variation>
    <location>
        <position position="98"/>
    </location>
</feature>
<feature type="mutagenesis site" description="Activity reduced 38-fold." evidence="4">
    <original>E</original>
    <variation>A</variation>
    <location>
        <position position="100"/>
    </location>
</feature>
<feature type="mutagenesis site" description="No activity." evidence="4">
    <original>D</original>
    <variation>A</variation>
    <location>
        <position position="184"/>
    </location>
</feature>
<feature type="strand" evidence="7">
    <location>
        <begin position="4"/>
        <end position="6"/>
    </location>
</feature>
<feature type="strand" evidence="7">
    <location>
        <begin position="9"/>
        <end position="12"/>
    </location>
</feature>
<feature type="strand" evidence="7">
    <location>
        <begin position="15"/>
        <end position="18"/>
    </location>
</feature>
<feature type="helix" evidence="7">
    <location>
        <begin position="25"/>
        <end position="35"/>
    </location>
</feature>
<feature type="strand" evidence="7">
    <location>
        <begin position="38"/>
        <end position="43"/>
    </location>
</feature>
<feature type="strand" evidence="6">
    <location>
        <begin position="44"/>
        <end position="46"/>
    </location>
</feature>
<feature type="helix" evidence="6">
    <location>
        <begin position="57"/>
        <end position="60"/>
    </location>
</feature>
<feature type="helix" evidence="7">
    <location>
        <begin position="63"/>
        <end position="65"/>
    </location>
</feature>
<feature type="strand" evidence="7">
    <location>
        <begin position="66"/>
        <end position="71"/>
    </location>
</feature>
<feature type="helix" evidence="7">
    <location>
        <begin position="78"/>
        <end position="90"/>
    </location>
</feature>
<feature type="strand" evidence="7">
    <location>
        <begin position="95"/>
        <end position="99"/>
    </location>
</feature>
<feature type="turn" evidence="7">
    <location>
        <begin position="105"/>
        <end position="107"/>
    </location>
</feature>
<feature type="helix" evidence="7">
    <location>
        <begin position="112"/>
        <end position="124"/>
    </location>
</feature>
<feature type="strand" evidence="7">
    <location>
        <begin position="129"/>
        <end position="133"/>
    </location>
</feature>
<feature type="helix" evidence="7">
    <location>
        <begin position="137"/>
        <end position="145"/>
    </location>
</feature>
<feature type="strand" evidence="7">
    <location>
        <begin position="151"/>
        <end position="153"/>
    </location>
</feature>
<feature type="strand" evidence="7">
    <location>
        <begin position="155"/>
        <end position="157"/>
    </location>
</feature>
<feature type="helix" evidence="7">
    <location>
        <begin position="167"/>
        <end position="176"/>
    </location>
</feature>
<feature type="strand" evidence="7">
    <location>
        <begin position="181"/>
        <end position="185"/>
    </location>
</feature>
<feature type="helix" evidence="7">
    <location>
        <begin position="190"/>
        <end position="198"/>
    </location>
</feature>
<feature type="strand" evidence="7">
    <location>
        <begin position="202"/>
        <end position="207"/>
    </location>
</feature>
<feature type="helix" evidence="7">
    <location>
        <begin position="208"/>
        <end position="211"/>
    </location>
</feature>
<feature type="strand" evidence="7">
    <location>
        <begin position="213"/>
        <end position="215"/>
    </location>
</feature>
<feature type="helix" evidence="7">
    <location>
        <begin position="216"/>
        <end position="236"/>
    </location>
</feature>
<sequence length="256" mass="27022">MSMLTIGGKSFQSRLLLGTGKYPSFDIQKEAVAVSESDILTFAVRRMNIFEASQPNFLEQLDLSKYTLLPNTAGASTAEEAVRIARLAKASGLCDMIKVEVIGCSRSLLPDPVETLKASEQLLEEGFIVLPYTSDDVVLARKLEELGVHAIMPGASPIGSGQGILNPLNLSFIIEQAKVPVIVDAGIGSPKDAAYAMELGADGVLLNTAVSGADDPVKMARAMKLAVEAGRLSYEAGRIPLKQYGTASSPGEGLPV</sequence>
<gene>
    <name type="primary">thiG</name>
    <name type="synonym">yjbT</name>
    <name type="ordered locus">BSU11690</name>
</gene>